<feature type="chain" id="PRO_0000388530" description="Sulfite reductase [NADPH] hemoprotein beta-component">
    <location>
        <begin position="1"/>
        <end position="568"/>
    </location>
</feature>
<feature type="binding site" evidence="1">
    <location>
        <position position="425"/>
    </location>
    <ligand>
        <name>[4Fe-4S] cluster</name>
        <dbReference type="ChEBI" id="CHEBI:49883"/>
    </ligand>
</feature>
<feature type="binding site" evidence="1">
    <location>
        <position position="431"/>
    </location>
    <ligand>
        <name>[4Fe-4S] cluster</name>
        <dbReference type="ChEBI" id="CHEBI:49883"/>
    </ligand>
</feature>
<feature type="binding site" evidence="1">
    <location>
        <position position="470"/>
    </location>
    <ligand>
        <name>[4Fe-4S] cluster</name>
        <dbReference type="ChEBI" id="CHEBI:49883"/>
    </ligand>
</feature>
<feature type="binding site" evidence="1">
    <location>
        <position position="474"/>
    </location>
    <ligand>
        <name>[4Fe-4S] cluster</name>
        <dbReference type="ChEBI" id="CHEBI:49883"/>
    </ligand>
</feature>
<feature type="binding site" description="axial binding residue" evidence="1">
    <location>
        <position position="474"/>
    </location>
    <ligand>
        <name>siroheme</name>
        <dbReference type="ChEBI" id="CHEBI:60052"/>
    </ligand>
    <ligandPart>
        <name>Fe</name>
        <dbReference type="ChEBI" id="CHEBI:18248"/>
    </ligandPart>
</feature>
<proteinExistence type="inferred from homology"/>
<reference key="1">
    <citation type="journal article" date="2008" name="J. Biotechnol.">
        <title>The genome of Xanthomonas campestris pv. campestris B100 and its use for the reconstruction of metabolic pathways involved in xanthan biosynthesis.</title>
        <authorList>
            <person name="Vorhoelter F.-J."/>
            <person name="Schneiker S."/>
            <person name="Goesmann A."/>
            <person name="Krause L."/>
            <person name="Bekel T."/>
            <person name="Kaiser O."/>
            <person name="Linke B."/>
            <person name="Patschkowski T."/>
            <person name="Rueckert C."/>
            <person name="Schmid J."/>
            <person name="Sidhu V.K."/>
            <person name="Sieber V."/>
            <person name="Tauch A."/>
            <person name="Watt S.A."/>
            <person name="Weisshaar B."/>
            <person name="Becker A."/>
            <person name="Niehaus K."/>
            <person name="Puehler A."/>
        </authorList>
    </citation>
    <scope>NUCLEOTIDE SEQUENCE [LARGE SCALE GENOMIC DNA]</scope>
    <source>
        <strain>B100</strain>
    </source>
</reference>
<gene>
    <name evidence="1" type="primary">cysI</name>
    <name type="ordered locus">xcc-b100_1003</name>
</gene>
<sequence>MTHSVEDIKSTSRRLRGSLEQSLADPVTGALREDDQTLIKYHGSYQQDDRDIRDERRRQKLEPAYQFMIRTRTPGGVISPSQWLALDGIATRYANHSLRITTRQAFQFHGVIKRELKATMQAINATLIDTLAACGDVNRNVQVAANPLLSQAHATLYADAARVSEHLLPNTRAYYEIWLDEERVSGSGAEDEPIYGDRYLPRKFKIGFAAPPHNDVDVFANDLGFIAILREGQLLGYNVSIGGGMGASHGDAETWPRVANVIGFVTGDQLLDIATAVVTTQRDLGNRAVRKRARFKYTIDDHGLDTIVAEIERRAGFSLQPAQPFAFAHNGDRYGWVEGEQGDWHLTLSLPAGRIADTDTAAHLSGLRAIAQLQMGEFRMTPNQNLVIAGVPAEQRAQIDQLVAQYGLDAGNLAPTALARGAMACVALPTCGLAMAEAERYLPDFSAALQPLLERHGLAQTPIVLRLSGCPNGCSRPYLAEIALVGKAPGRYNLMLGGDRRGQRLNTLYRENINEADILAALEPLLARYAAERDRHTDEGFGDFLHRSGLIALPPYPTHRHLDLELLA</sequence>
<comment type="function">
    <text evidence="1">Component of the sulfite reductase complex that catalyzes the 6-electron reduction of sulfite to sulfide. This is one of several activities required for the biosynthesis of L-cysteine from sulfate.</text>
</comment>
<comment type="catalytic activity">
    <reaction evidence="1">
        <text>hydrogen sulfide + 3 NADP(+) + 3 H2O = sulfite + 3 NADPH + 4 H(+)</text>
        <dbReference type="Rhea" id="RHEA:13801"/>
        <dbReference type="ChEBI" id="CHEBI:15377"/>
        <dbReference type="ChEBI" id="CHEBI:15378"/>
        <dbReference type="ChEBI" id="CHEBI:17359"/>
        <dbReference type="ChEBI" id="CHEBI:29919"/>
        <dbReference type="ChEBI" id="CHEBI:57783"/>
        <dbReference type="ChEBI" id="CHEBI:58349"/>
        <dbReference type="EC" id="1.8.1.2"/>
    </reaction>
</comment>
<comment type="cofactor">
    <cofactor evidence="1">
        <name>siroheme</name>
        <dbReference type="ChEBI" id="CHEBI:60052"/>
    </cofactor>
    <text evidence="1">Binds 1 siroheme per subunit.</text>
</comment>
<comment type="cofactor">
    <cofactor evidence="1">
        <name>[4Fe-4S] cluster</name>
        <dbReference type="ChEBI" id="CHEBI:49883"/>
    </cofactor>
    <text evidence="1">Binds 1 [4Fe-4S] cluster per subunit.</text>
</comment>
<comment type="pathway">
    <text evidence="1">Sulfur metabolism; hydrogen sulfide biosynthesis; hydrogen sulfide from sulfite (NADPH route): step 1/1.</text>
</comment>
<comment type="subunit">
    <text evidence="1">Alpha(8)-beta(8). The alpha component is a flavoprotein, the beta component is a hemoprotein.</text>
</comment>
<comment type="similarity">
    <text evidence="1">Belongs to the nitrite and sulfite reductase 4Fe-4S domain family.</text>
</comment>
<comment type="sequence caution" evidence="2">
    <conflict type="erroneous initiation">
        <sequence resource="EMBL-CDS" id="CAP50351"/>
    </conflict>
</comment>
<evidence type="ECO:0000255" key="1">
    <source>
        <dbReference type="HAMAP-Rule" id="MF_01540"/>
    </source>
</evidence>
<evidence type="ECO:0000305" key="2"/>
<organism>
    <name type="scientific">Xanthomonas campestris pv. campestris (strain B100)</name>
    <dbReference type="NCBI Taxonomy" id="509169"/>
    <lineage>
        <taxon>Bacteria</taxon>
        <taxon>Pseudomonadati</taxon>
        <taxon>Pseudomonadota</taxon>
        <taxon>Gammaproteobacteria</taxon>
        <taxon>Lysobacterales</taxon>
        <taxon>Lysobacteraceae</taxon>
        <taxon>Xanthomonas</taxon>
    </lineage>
</organism>
<keyword id="KW-0004">4Fe-4S</keyword>
<keyword id="KW-0028">Amino-acid biosynthesis</keyword>
<keyword id="KW-0198">Cysteine biosynthesis</keyword>
<keyword id="KW-0349">Heme</keyword>
<keyword id="KW-0408">Iron</keyword>
<keyword id="KW-0411">Iron-sulfur</keyword>
<keyword id="KW-0479">Metal-binding</keyword>
<keyword id="KW-0521">NADP</keyword>
<keyword id="KW-0560">Oxidoreductase</keyword>
<protein>
    <recommendedName>
        <fullName evidence="1">Sulfite reductase [NADPH] hemoprotein beta-component</fullName>
        <shortName evidence="1">SiR-HP</shortName>
        <shortName evidence="1">SiRHP</shortName>
        <ecNumber evidence="1">1.8.1.2</ecNumber>
    </recommendedName>
</protein>
<dbReference type="EC" id="1.8.1.2" evidence="1"/>
<dbReference type="EMBL" id="AM920689">
    <property type="protein sequence ID" value="CAP50351.1"/>
    <property type="status" value="ALT_INIT"/>
    <property type="molecule type" value="Genomic_DNA"/>
</dbReference>
<dbReference type="SMR" id="B0RPG6"/>
<dbReference type="KEGG" id="xca:xcc-b100_1003"/>
<dbReference type="HOGENOM" id="CLU_001975_3_2_6"/>
<dbReference type="UniPathway" id="UPA00140">
    <property type="reaction ID" value="UER00207"/>
</dbReference>
<dbReference type="Proteomes" id="UP000001188">
    <property type="component" value="Chromosome"/>
</dbReference>
<dbReference type="GO" id="GO:0009337">
    <property type="term" value="C:sulfite reductase complex (NADPH)"/>
    <property type="evidence" value="ECO:0007669"/>
    <property type="project" value="InterPro"/>
</dbReference>
<dbReference type="GO" id="GO:0051539">
    <property type="term" value="F:4 iron, 4 sulfur cluster binding"/>
    <property type="evidence" value="ECO:0007669"/>
    <property type="project" value="UniProtKB-KW"/>
</dbReference>
<dbReference type="GO" id="GO:0020037">
    <property type="term" value="F:heme binding"/>
    <property type="evidence" value="ECO:0007669"/>
    <property type="project" value="InterPro"/>
</dbReference>
<dbReference type="GO" id="GO:0046872">
    <property type="term" value="F:metal ion binding"/>
    <property type="evidence" value="ECO:0007669"/>
    <property type="project" value="UniProtKB-KW"/>
</dbReference>
<dbReference type="GO" id="GO:0050661">
    <property type="term" value="F:NADP binding"/>
    <property type="evidence" value="ECO:0007669"/>
    <property type="project" value="InterPro"/>
</dbReference>
<dbReference type="GO" id="GO:0050311">
    <property type="term" value="F:sulfite reductase (ferredoxin) activity"/>
    <property type="evidence" value="ECO:0007669"/>
    <property type="project" value="TreeGrafter"/>
</dbReference>
<dbReference type="GO" id="GO:0004783">
    <property type="term" value="F:sulfite reductase (NADPH) activity"/>
    <property type="evidence" value="ECO:0007669"/>
    <property type="project" value="UniProtKB-UniRule"/>
</dbReference>
<dbReference type="GO" id="GO:0019344">
    <property type="term" value="P:cysteine biosynthetic process"/>
    <property type="evidence" value="ECO:0007669"/>
    <property type="project" value="UniProtKB-KW"/>
</dbReference>
<dbReference type="GO" id="GO:0070814">
    <property type="term" value="P:hydrogen sulfide biosynthetic process"/>
    <property type="evidence" value="ECO:0007669"/>
    <property type="project" value="UniProtKB-UniRule"/>
</dbReference>
<dbReference type="GO" id="GO:0000103">
    <property type="term" value="P:sulfate assimilation"/>
    <property type="evidence" value="ECO:0007669"/>
    <property type="project" value="UniProtKB-UniRule"/>
</dbReference>
<dbReference type="FunFam" id="3.30.413.10:FF:000003">
    <property type="entry name" value="Sulfite reductase [NADPH] hemoprotein beta-component"/>
    <property type="match status" value="1"/>
</dbReference>
<dbReference type="Gene3D" id="3.30.413.10">
    <property type="entry name" value="Sulfite Reductase Hemoprotein, domain 1"/>
    <property type="match status" value="2"/>
</dbReference>
<dbReference type="HAMAP" id="MF_01540">
    <property type="entry name" value="CysI"/>
    <property type="match status" value="1"/>
</dbReference>
<dbReference type="InterPro" id="IPR011786">
    <property type="entry name" value="CysI"/>
</dbReference>
<dbReference type="InterPro" id="IPR005117">
    <property type="entry name" value="NiRdtase/SiRdtase_haem-b_fer"/>
</dbReference>
<dbReference type="InterPro" id="IPR036136">
    <property type="entry name" value="Nit/Sulf_reduc_fer-like_dom_sf"/>
</dbReference>
<dbReference type="InterPro" id="IPR006067">
    <property type="entry name" value="NO2/SO3_Rdtase_4Fe4S_dom"/>
</dbReference>
<dbReference type="InterPro" id="IPR045169">
    <property type="entry name" value="NO2/SO3_Rdtase_4Fe4S_prot"/>
</dbReference>
<dbReference type="InterPro" id="IPR045854">
    <property type="entry name" value="NO2/SO3_Rdtase_4Fe4S_sf"/>
</dbReference>
<dbReference type="InterPro" id="IPR006066">
    <property type="entry name" value="NO2/SO3_Rdtase_FeS/sirohaem_BS"/>
</dbReference>
<dbReference type="NCBIfam" id="TIGR02041">
    <property type="entry name" value="CysI"/>
    <property type="match status" value="1"/>
</dbReference>
<dbReference type="NCBIfam" id="NF010029">
    <property type="entry name" value="PRK13504.1"/>
    <property type="match status" value="1"/>
</dbReference>
<dbReference type="PANTHER" id="PTHR11493:SF47">
    <property type="entry name" value="SULFITE REDUCTASE [NADPH] SUBUNIT BETA"/>
    <property type="match status" value="1"/>
</dbReference>
<dbReference type="PANTHER" id="PTHR11493">
    <property type="entry name" value="SULFITE REDUCTASE [NADPH] SUBUNIT BETA-RELATED"/>
    <property type="match status" value="1"/>
</dbReference>
<dbReference type="Pfam" id="PF01077">
    <property type="entry name" value="NIR_SIR"/>
    <property type="match status" value="1"/>
</dbReference>
<dbReference type="Pfam" id="PF03460">
    <property type="entry name" value="NIR_SIR_ferr"/>
    <property type="match status" value="2"/>
</dbReference>
<dbReference type="PRINTS" id="PR00397">
    <property type="entry name" value="SIROHAEM"/>
</dbReference>
<dbReference type="SUPFAM" id="SSF56014">
    <property type="entry name" value="Nitrite and sulphite reductase 4Fe-4S domain-like"/>
    <property type="match status" value="2"/>
</dbReference>
<dbReference type="SUPFAM" id="SSF55124">
    <property type="entry name" value="Nitrite/Sulfite reductase N-terminal domain-like"/>
    <property type="match status" value="2"/>
</dbReference>
<dbReference type="PROSITE" id="PS00365">
    <property type="entry name" value="NIR_SIR"/>
    <property type="match status" value="1"/>
</dbReference>
<name>CYSI_XANCB</name>
<accession>B0RPG6</accession>